<keyword id="KW-0025">Alternative splicing</keyword>
<keyword id="KW-0256">Endoplasmic reticulum</keyword>
<keyword id="KW-0413">Isomerase</keyword>
<keyword id="KW-0444">Lipid biosynthesis</keyword>
<keyword id="KW-0443">Lipid metabolism</keyword>
<keyword id="KW-0472">Membrane</keyword>
<keyword id="KW-1185">Reference proteome</keyword>
<keyword id="KW-0752">Steroid biosynthesis</keyword>
<keyword id="KW-0753">Steroid metabolism</keyword>
<keyword id="KW-0756">Sterol biosynthesis</keyword>
<keyword id="KW-1207">Sterol metabolism</keyword>
<keyword id="KW-0812">Transmembrane</keyword>
<keyword id="KW-1133">Transmembrane helix</keyword>
<name>EBP_ORYSJ</name>
<reference key="1">
    <citation type="journal article" date="2002" name="Nature">
        <title>The genome sequence and structure of rice chromosome 1.</title>
        <authorList>
            <person name="Sasaki T."/>
            <person name="Matsumoto T."/>
            <person name="Yamamoto K."/>
            <person name="Sakata K."/>
            <person name="Baba T."/>
            <person name="Katayose Y."/>
            <person name="Wu J."/>
            <person name="Niimura Y."/>
            <person name="Cheng Z."/>
            <person name="Nagamura Y."/>
            <person name="Antonio B.A."/>
            <person name="Kanamori H."/>
            <person name="Hosokawa S."/>
            <person name="Masukawa M."/>
            <person name="Arikawa K."/>
            <person name="Chiden Y."/>
            <person name="Hayashi M."/>
            <person name="Okamoto M."/>
            <person name="Ando T."/>
            <person name="Aoki H."/>
            <person name="Arita K."/>
            <person name="Hamada M."/>
            <person name="Harada C."/>
            <person name="Hijishita S."/>
            <person name="Honda M."/>
            <person name="Ichikawa Y."/>
            <person name="Idonuma A."/>
            <person name="Iijima M."/>
            <person name="Ikeda M."/>
            <person name="Ikeno M."/>
            <person name="Ito S."/>
            <person name="Ito T."/>
            <person name="Ito Y."/>
            <person name="Ito Y."/>
            <person name="Iwabuchi A."/>
            <person name="Kamiya K."/>
            <person name="Karasawa W."/>
            <person name="Katagiri S."/>
            <person name="Kikuta A."/>
            <person name="Kobayashi N."/>
            <person name="Kono I."/>
            <person name="Machita K."/>
            <person name="Maehara T."/>
            <person name="Mizuno H."/>
            <person name="Mizubayashi T."/>
            <person name="Mukai Y."/>
            <person name="Nagasaki H."/>
            <person name="Nakashima M."/>
            <person name="Nakama Y."/>
            <person name="Nakamichi Y."/>
            <person name="Nakamura M."/>
            <person name="Namiki N."/>
            <person name="Negishi M."/>
            <person name="Ohta I."/>
            <person name="Ono N."/>
            <person name="Saji S."/>
            <person name="Sakai K."/>
            <person name="Shibata M."/>
            <person name="Shimokawa T."/>
            <person name="Shomura A."/>
            <person name="Song J."/>
            <person name="Takazaki Y."/>
            <person name="Terasawa K."/>
            <person name="Tsuji K."/>
            <person name="Waki K."/>
            <person name="Yamagata H."/>
            <person name="Yamane H."/>
            <person name="Yoshiki S."/>
            <person name="Yoshihara R."/>
            <person name="Yukawa K."/>
            <person name="Zhong H."/>
            <person name="Iwama H."/>
            <person name="Endo T."/>
            <person name="Ito H."/>
            <person name="Hahn J.H."/>
            <person name="Kim H.-I."/>
            <person name="Eun M.-Y."/>
            <person name="Yano M."/>
            <person name="Jiang J."/>
            <person name="Gojobori T."/>
        </authorList>
    </citation>
    <scope>NUCLEOTIDE SEQUENCE [LARGE SCALE GENOMIC DNA]</scope>
    <source>
        <strain>cv. Nipponbare</strain>
    </source>
</reference>
<reference key="2">
    <citation type="journal article" date="2005" name="Nature">
        <title>The map-based sequence of the rice genome.</title>
        <authorList>
            <consortium name="International rice genome sequencing project (IRGSP)"/>
        </authorList>
    </citation>
    <scope>NUCLEOTIDE SEQUENCE [LARGE SCALE GENOMIC DNA]</scope>
    <source>
        <strain>cv. Nipponbare</strain>
    </source>
</reference>
<reference key="3">
    <citation type="journal article" date="2008" name="Nucleic Acids Res.">
        <title>The rice annotation project database (RAP-DB): 2008 update.</title>
        <authorList>
            <consortium name="The rice annotation project (RAP)"/>
        </authorList>
    </citation>
    <scope>GENOME REANNOTATION</scope>
    <source>
        <strain>cv. Nipponbare</strain>
    </source>
</reference>
<reference key="4">
    <citation type="journal article" date="2013" name="Rice">
        <title>Improvement of the Oryza sativa Nipponbare reference genome using next generation sequence and optical map data.</title>
        <authorList>
            <person name="Kawahara Y."/>
            <person name="de la Bastide M."/>
            <person name="Hamilton J.P."/>
            <person name="Kanamori H."/>
            <person name="McCombie W.R."/>
            <person name="Ouyang S."/>
            <person name="Schwartz D.C."/>
            <person name="Tanaka T."/>
            <person name="Wu J."/>
            <person name="Zhou S."/>
            <person name="Childs K.L."/>
            <person name="Davidson R.M."/>
            <person name="Lin H."/>
            <person name="Quesada-Ocampo L."/>
            <person name="Vaillancourt B."/>
            <person name="Sakai H."/>
            <person name="Lee S.S."/>
            <person name="Kim J."/>
            <person name="Numa H."/>
            <person name="Itoh T."/>
            <person name="Buell C.R."/>
            <person name="Matsumoto T."/>
        </authorList>
    </citation>
    <scope>GENOME REANNOTATION</scope>
    <source>
        <strain>cv. Nipponbare</strain>
    </source>
</reference>
<reference key="5">
    <citation type="journal article" date="2003" name="Science">
        <title>Collection, mapping, and annotation of over 28,000 cDNA clones from japonica rice.</title>
        <authorList>
            <consortium name="The rice full-length cDNA consortium"/>
        </authorList>
    </citation>
    <scope>NUCLEOTIDE SEQUENCE [LARGE SCALE MRNA] (ISOFORMS 1 AND 2)</scope>
    <source>
        <strain>cv. Nipponbare</strain>
    </source>
</reference>
<gene>
    <name type="ordered locus">Os01g0103600</name>
    <name type="ordered locus">LOC_Os01g01369</name>
    <name type="ORF">P0436E04.5</name>
    <name type="ORF">P0455C04.26</name>
</gene>
<protein>
    <recommendedName>
        <fullName>Probable 3-beta-hydroxysteroid-Delta(8),Delta(7)-isomerase</fullName>
        <ecNumber>5.3.3.5</ecNumber>
    </recommendedName>
    <alternativeName>
        <fullName>Cholestenol Delta-isomerase</fullName>
    </alternativeName>
    <alternativeName>
        <fullName>Delta(8)-Delta(7) sterol isomerase</fullName>
        <shortName>D8-D7 sterol isomerase</shortName>
    </alternativeName>
</protein>
<dbReference type="EC" id="5.3.3.5"/>
<dbReference type="EMBL" id="AP002818">
    <property type="protein sequence ID" value="BAB16323.1"/>
    <property type="molecule type" value="Genomic_DNA"/>
</dbReference>
<dbReference type="EMBL" id="AP002969">
    <property type="protein sequence ID" value="BAB92148.1"/>
    <property type="molecule type" value="Genomic_DNA"/>
</dbReference>
<dbReference type="EMBL" id="AP008207">
    <property type="protein sequence ID" value="BAF03671.1"/>
    <property type="molecule type" value="Genomic_DNA"/>
</dbReference>
<dbReference type="EMBL" id="AP014957">
    <property type="protein sequence ID" value="BAS69945.1"/>
    <property type="molecule type" value="Genomic_DNA"/>
</dbReference>
<dbReference type="EMBL" id="AK059848">
    <property type="status" value="NOT_ANNOTATED_CDS"/>
    <property type="molecule type" value="mRNA"/>
</dbReference>
<dbReference type="EMBL" id="AK102848">
    <property type="status" value="NOT_ANNOTATED_CDS"/>
    <property type="molecule type" value="mRNA"/>
</dbReference>
<dbReference type="RefSeq" id="XP_015617405.1">
    <property type="nucleotide sequence ID" value="XM_015761919.1"/>
</dbReference>
<dbReference type="SMR" id="Q9FTZ2"/>
<dbReference type="FunCoup" id="Q9FTZ2">
    <property type="interactions" value="1557"/>
</dbReference>
<dbReference type="STRING" id="39947.Q9FTZ2"/>
<dbReference type="PaxDb" id="39947-Q9FTZ2"/>
<dbReference type="EnsemblPlants" id="Os01t0103600-02">
    <molecule id="Q9FTZ2-1"/>
    <property type="protein sequence ID" value="Os01t0103600-02"/>
    <property type="gene ID" value="Os01g0103600"/>
</dbReference>
<dbReference type="Gramene" id="Os01t0103600-02">
    <molecule id="Q9FTZ2-1"/>
    <property type="protein sequence ID" value="Os01t0103600-02"/>
    <property type="gene ID" value="Os01g0103600"/>
</dbReference>
<dbReference type="KEGG" id="dosa:Os01g0103600"/>
<dbReference type="eggNOG" id="KOG4826">
    <property type="taxonomic scope" value="Eukaryota"/>
</dbReference>
<dbReference type="HOGENOM" id="CLU_072128_2_0_1"/>
<dbReference type="InParanoid" id="Q9FTZ2"/>
<dbReference type="OMA" id="VIEGWFC"/>
<dbReference type="OrthoDB" id="58557at2759"/>
<dbReference type="PlantReactome" id="R-OSA-1119286">
    <property type="pathway name" value="Cholesterol biosynthesis II (via 24,25-dihydrolanosterol)"/>
</dbReference>
<dbReference type="PlantReactome" id="R-OSA-1119370">
    <property type="pathway name" value="Sterol biosynthesis"/>
</dbReference>
<dbReference type="PlantReactome" id="R-OSA-1119439">
    <property type="pathway name" value="Cholesterol biosynthesis III (via desmosterol)"/>
</dbReference>
<dbReference type="PlantReactome" id="R-OSA-1119559">
    <property type="pathway name" value="Cholesterol biosynthesis I"/>
</dbReference>
<dbReference type="UniPathway" id="UPA00766"/>
<dbReference type="Proteomes" id="UP000000763">
    <property type="component" value="Chromosome 1"/>
</dbReference>
<dbReference type="Proteomes" id="UP000059680">
    <property type="component" value="Chromosome 1"/>
</dbReference>
<dbReference type="ExpressionAtlas" id="Q9FTZ2">
    <property type="expression patterns" value="baseline and differential"/>
</dbReference>
<dbReference type="GO" id="GO:0005783">
    <property type="term" value="C:endoplasmic reticulum"/>
    <property type="evidence" value="ECO:0000318"/>
    <property type="project" value="GO_Central"/>
</dbReference>
<dbReference type="GO" id="GO:0005789">
    <property type="term" value="C:endoplasmic reticulum membrane"/>
    <property type="evidence" value="ECO:0007669"/>
    <property type="project" value="UniProtKB-SubCell"/>
</dbReference>
<dbReference type="GO" id="GO:0000247">
    <property type="term" value="F:C-8 sterol isomerase activity"/>
    <property type="evidence" value="ECO:0000318"/>
    <property type="project" value="GO_Central"/>
</dbReference>
<dbReference type="GO" id="GO:0047750">
    <property type="term" value="F:cholestenol delta-isomerase activity"/>
    <property type="evidence" value="ECO:0007669"/>
    <property type="project" value="UniProtKB-EC"/>
</dbReference>
<dbReference type="GO" id="GO:0004769">
    <property type="term" value="F:steroid Delta-isomerase activity"/>
    <property type="evidence" value="ECO:0000318"/>
    <property type="project" value="GO_Central"/>
</dbReference>
<dbReference type="GO" id="GO:0016126">
    <property type="term" value="P:sterol biosynthetic process"/>
    <property type="evidence" value="ECO:0000318"/>
    <property type="project" value="GO_Central"/>
</dbReference>
<dbReference type="InterPro" id="IPR007905">
    <property type="entry name" value="EBP"/>
</dbReference>
<dbReference type="InterPro" id="IPR033118">
    <property type="entry name" value="EXPERA"/>
</dbReference>
<dbReference type="PANTHER" id="PTHR14207:SF0">
    <property type="entry name" value="3-BETA-HYDROXYSTEROID-DELTA(8),DELTA(7)-ISOMERASE"/>
    <property type="match status" value="1"/>
</dbReference>
<dbReference type="PANTHER" id="PTHR14207">
    <property type="entry name" value="STEROL ISOMERASE"/>
    <property type="match status" value="1"/>
</dbReference>
<dbReference type="Pfam" id="PF05241">
    <property type="entry name" value="EBP"/>
    <property type="match status" value="1"/>
</dbReference>
<dbReference type="PROSITE" id="PS51751">
    <property type="entry name" value="EXPERA"/>
    <property type="match status" value="1"/>
</dbReference>
<accession>Q9FTZ2</accession>
<accession>A0A0N7KC64</accession>
<accession>Q0JRF7</accession>
<accession>Q7F734</accession>
<organism>
    <name type="scientific">Oryza sativa subsp. japonica</name>
    <name type="common">Rice</name>
    <dbReference type="NCBI Taxonomy" id="39947"/>
    <lineage>
        <taxon>Eukaryota</taxon>
        <taxon>Viridiplantae</taxon>
        <taxon>Streptophyta</taxon>
        <taxon>Embryophyta</taxon>
        <taxon>Tracheophyta</taxon>
        <taxon>Spermatophyta</taxon>
        <taxon>Magnoliopsida</taxon>
        <taxon>Liliopsida</taxon>
        <taxon>Poales</taxon>
        <taxon>Poaceae</taxon>
        <taxon>BOP clade</taxon>
        <taxon>Oryzoideae</taxon>
        <taxon>Oryzeae</taxon>
        <taxon>Oryzinae</taxon>
        <taxon>Oryza</taxon>
        <taxon>Oryza sativa</taxon>
    </lineage>
</organism>
<sequence length="219" mass="24758">MGHPHPHPYAPAELHLPGFVPLQLSQAQILVPYLATSLFLLLAVWLISGRCSRRLSDTDRWLMCWWAFTGLTHIIIEGTFVFAPNFFSNQNPSYFDEVWKEYSKGDSRYVARDPATVTVEGITAVLEGPASLLAVYAIASGKSYSHILQFTVCLGQLYGCLVYFITAYLDGFNFWTSPFYFWAYFIGANSSWVVIPTMIAIRSWKKICAAFQGEKVKTK</sequence>
<proteinExistence type="evidence at transcript level"/>
<feature type="chain" id="PRO_0000174346" description="Probable 3-beta-hydroxysteroid-Delta(8),Delta(7)-isomerase">
    <location>
        <begin position="1"/>
        <end position="219"/>
    </location>
</feature>
<feature type="transmembrane region" description="Helical" evidence="2">
    <location>
        <begin position="29"/>
        <end position="49"/>
    </location>
</feature>
<feature type="transmembrane region" description="Helical" evidence="2">
    <location>
        <begin position="62"/>
        <end position="82"/>
    </location>
</feature>
<feature type="transmembrane region" description="Helical" evidence="2">
    <location>
        <begin position="119"/>
        <end position="139"/>
    </location>
</feature>
<feature type="transmembrane region" description="Helical" evidence="2">
    <location>
        <begin position="181"/>
        <end position="201"/>
    </location>
</feature>
<feature type="domain" description="EXPERA" evidence="3">
    <location>
        <begin position="58"/>
        <end position="200"/>
    </location>
</feature>
<feature type="splice variant" id="VSP_017657" description="In isoform 2." evidence="4">
    <original>AIASGKSYSHILQFTVCLGQLYGCLVYFITAYLDGFNFWTSPFYFWAYFIGANSSWVVIPTMIAIRSW</original>
    <variation>SSFLPFHLTMRTLPLSLSLSLSLSLSLSLSLSLSFPFLTYLTIFSLQMHFSHVFLPFVILLFFFPLSS</variation>
    <location>
        <begin position="137"/>
        <end position="204"/>
    </location>
</feature>
<comment type="function">
    <text evidence="1">Catalyzes the conversion of Delta(8)-sterols to their corresponding Delta(7)-isomers.</text>
</comment>
<comment type="catalytic activity">
    <reaction>
        <text>lathosterol = 5alpha-cholest-8-en-3beta-ol</text>
        <dbReference type="Rhea" id="RHEA:15281"/>
        <dbReference type="ChEBI" id="CHEBI:16608"/>
        <dbReference type="ChEBI" id="CHEBI:17168"/>
        <dbReference type="EC" id="5.3.3.5"/>
    </reaction>
</comment>
<comment type="pathway">
    <text>Steroid biosynthesis; sterol biosynthesis.</text>
</comment>
<comment type="subcellular location">
    <subcellularLocation>
        <location evidence="1">Endoplasmic reticulum membrane</location>
        <topology evidence="1">Multi-pass membrane protein</topology>
    </subcellularLocation>
</comment>
<comment type="alternative products">
    <event type="alternative splicing"/>
    <isoform>
        <id>Q9FTZ2-1</id>
        <name>1</name>
        <sequence type="displayed"/>
    </isoform>
    <isoform>
        <id>Q9FTZ2-2</id>
        <name>2</name>
        <sequence type="described" ref="VSP_017657"/>
    </isoform>
</comment>
<comment type="similarity">
    <text evidence="5">Belongs to the EBP family.</text>
</comment>
<evidence type="ECO:0000250" key="1"/>
<evidence type="ECO:0000255" key="2"/>
<evidence type="ECO:0000255" key="3">
    <source>
        <dbReference type="PROSITE-ProRule" id="PRU01087"/>
    </source>
</evidence>
<evidence type="ECO:0000303" key="4">
    <source>
    </source>
</evidence>
<evidence type="ECO:0000305" key="5"/>